<name>AOSR_MYCBO</name>
<keyword id="KW-0010">Activator</keyword>
<keyword id="KW-1015">Disulfide bond</keyword>
<keyword id="KW-0676">Redox-active center</keyword>
<keyword id="KW-1185">Reference proteome</keyword>
<keyword id="KW-0346">Stress response</keyword>
<keyword id="KW-0804">Transcription</keyword>
<keyword id="KW-0805">Transcription regulation</keyword>
<reference key="1">
    <citation type="journal article" date="2003" name="Proc. Natl. Acad. Sci. U.S.A.">
        <title>The complete genome sequence of Mycobacterium bovis.</title>
        <authorList>
            <person name="Garnier T."/>
            <person name="Eiglmeier K."/>
            <person name="Camus J.-C."/>
            <person name="Medina N."/>
            <person name="Mansoor H."/>
            <person name="Pryor M."/>
            <person name="Duthoy S."/>
            <person name="Grondin S."/>
            <person name="Lacroix C."/>
            <person name="Monsempe C."/>
            <person name="Simon S."/>
            <person name="Harris B."/>
            <person name="Atkin R."/>
            <person name="Doggett J."/>
            <person name="Mayes R."/>
            <person name="Keating L."/>
            <person name="Wheeler P.R."/>
            <person name="Parkhill J."/>
            <person name="Barrell B.G."/>
            <person name="Cole S.T."/>
            <person name="Gordon S.V."/>
            <person name="Hewinson R.G."/>
        </authorList>
    </citation>
    <scope>NUCLEOTIDE SEQUENCE [LARGE SCALE GENOMIC DNA]</scope>
    <source>
        <strain>ATCC BAA-935 / AF2122/97</strain>
    </source>
</reference>
<reference key="2">
    <citation type="journal article" date="2017" name="Genome Announc.">
        <title>Updated reference genome sequence and annotation of Mycobacterium bovis AF2122/97.</title>
        <authorList>
            <person name="Malone K.M."/>
            <person name="Farrell D."/>
            <person name="Stuber T.P."/>
            <person name="Schubert O.T."/>
            <person name="Aebersold R."/>
            <person name="Robbe-Austerman S."/>
            <person name="Gordon S.V."/>
        </authorList>
    </citation>
    <scope>NUCLEOTIDE SEQUENCE [LARGE SCALE GENOMIC DNA]</scope>
    <scope>GENOME REANNOTATION</scope>
    <source>
        <strain>ATCC BAA-935 / AF2122/97</strain>
    </source>
</reference>
<gene>
    <name evidence="1" type="primary">aosR</name>
    <name type="ordered locus">BQ2027_MB1367</name>
</gene>
<accession>P64810</accession>
<accession>A0A1R3XY32</accession>
<accession>Q10643</accession>
<accession>X2BHL1</accession>
<evidence type="ECO:0000250" key="1">
    <source>
        <dbReference type="UniProtKB" id="P9WM25"/>
    </source>
</evidence>
<evidence type="ECO:0000305" key="2"/>
<comment type="function">
    <text evidence="1">Transcription factor crucial for intra-mycobacterial redox homeostasis and protection against host-derived oxidative and nitrosative radicals. In response to oxidative stress, interacts with the ECF sigma factor SigH and, in conjunction with SigH, binds to an auxiliary promoter upstream of mec-cysO-cysM, leading to the transcriptional activation of these genes encoding a non-canonical actinomycete-specific cysteine biosynthesis pathway. Increased transcription of mec-cysO-cysM results in enhanced production of L-cysteine and cysteine-derived antioxidant molecules. Increased production of cysteine protects mycobacteria cells from host phagocyte-derived oxidative and nitrosative stress, thus facilitating the mycobacterial growth in the host.</text>
</comment>
<comment type="activity regulation">
    <text evidence="1">Activity is modulated by the formation of a disulfide bound within the N-terminal Cys-X-X-X-Cys (CXXXC) motif. This intramolecular disulfide bond is formed in response to oxidative stress, and results in oxidative stress-dependent interaction with the sigma factor SigH.</text>
</comment>
<comment type="subunit">
    <text evidence="1">Homodimer. Under oxidative stress, interacts with the extracytoplasmic-function (ECF) RNA polymerase sigma factor SigH.</text>
</comment>
<comment type="similarity">
    <text evidence="2">Belongs to the AosR family.</text>
</comment>
<organism>
    <name type="scientific">Mycobacterium bovis (strain ATCC BAA-935 / AF2122/97)</name>
    <dbReference type="NCBI Taxonomy" id="233413"/>
    <lineage>
        <taxon>Bacteria</taxon>
        <taxon>Bacillati</taxon>
        <taxon>Actinomycetota</taxon>
        <taxon>Actinomycetes</taxon>
        <taxon>Mycobacteriales</taxon>
        <taxon>Mycobacteriaceae</taxon>
        <taxon>Mycobacterium</taxon>
        <taxon>Mycobacterium tuberculosis complex</taxon>
    </lineage>
</organism>
<proteinExistence type="inferred from homology"/>
<feature type="chain" id="PRO_0000103806" description="Oxidative stress regulator AosR">
    <location>
        <begin position="1"/>
        <end position="218"/>
    </location>
</feature>
<feature type="short sequence motif" description="CXXXC" evidence="1">
    <location>
        <begin position="5"/>
        <end position="9"/>
    </location>
</feature>
<feature type="disulfide bond" description="Redox-active" evidence="1">
    <location>
        <begin position="5"/>
        <end position="9"/>
    </location>
</feature>
<sequence>MPPVCGRRCSRTGEIRGYSGSIVRRWKRVETRDGPRFRSSLAPHEAALLKNLAGAMIGLLDDRDSSSPSDELEEITGIKTGHAQRPGDPTLRRLLPDFYRPDDLDDDDPTAVDGSESFNAALRSLHEPEIIDAKRVAAQQLLDTVPDNGGRLELTESDANAWIAAVNDLRLALGVMLEIGPRGPERLPGNHPLAAHFNVYQWLTVLQEYLVLVLMGSR</sequence>
<protein>
    <recommendedName>
        <fullName evidence="1">Oxidative stress regulator AosR</fullName>
    </recommendedName>
    <alternativeName>
        <fullName evidence="1">Actinomycetes oxidative stress regulator</fullName>
    </alternativeName>
</protein>
<dbReference type="EMBL" id="LT708304">
    <property type="protein sequence ID" value="SIT99970.1"/>
    <property type="molecule type" value="Genomic_DNA"/>
</dbReference>
<dbReference type="RefSeq" id="NP_855021.1">
    <property type="nucleotide sequence ID" value="NC_002945.3"/>
</dbReference>
<dbReference type="KEGG" id="mbo:BQ2027_MB1367"/>
<dbReference type="PATRIC" id="fig|233413.5.peg.1499"/>
<dbReference type="Proteomes" id="UP000001419">
    <property type="component" value="Chromosome"/>
</dbReference>
<dbReference type="InterPro" id="IPR018561">
    <property type="entry name" value="AosR"/>
</dbReference>
<dbReference type="Pfam" id="PF09438">
    <property type="entry name" value="DUF2017"/>
    <property type="match status" value="1"/>
</dbReference>